<evidence type="ECO:0000255" key="1">
    <source>
        <dbReference type="HAMAP-Rule" id="MF_01082"/>
    </source>
</evidence>
<accession>Q5SI49</accession>
<feature type="chain" id="PRO_0000152524" description="tRNA pseudouridine synthase D">
    <location>
        <begin position="1"/>
        <end position="356"/>
    </location>
</feature>
<feature type="domain" description="TRUD" evidence="1">
    <location>
        <begin position="159"/>
        <end position="302"/>
    </location>
</feature>
<feature type="active site" description="Nucleophile" evidence="1">
    <location>
        <position position="84"/>
    </location>
</feature>
<proteinExistence type="inferred from homology"/>
<dbReference type="EC" id="5.4.99.27" evidence="1"/>
<dbReference type="EMBL" id="AP008226">
    <property type="protein sequence ID" value="BAD71354.1"/>
    <property type="molecule type" value="Genomic_DNA"/>
</dbReference>
<dbReference type="RefSeq" id="WP_011228739.1">
    <property type="nucleotide sequence ID" value="NC_006461.1"/>
</dbReference>
<dbReference type="RefSeq" id="YP_144797.1">
    <property type="nucleotide sequence ID" value="NC_006461.1"/>
</dbReference>
<dbReference type="SMR" id="Q5SI49"/>
<dbReference type="EnsemblBacteria" id="BAD71354">
    <property type="protein sequence ID" value="BAD71354"/>
    <property type="gene ID" value="BAD71354"/>
</dbReference>
<dbReference type="GeneID" id="3169926"/>
<dbReference type="KEGG" id="ttj:TTHA1531"/>
<dbReference type="PATRIC" id="fig|300852.9.peg.1505"/>
<dbReference type="eggNOG" id="COG0585">
    <property type="taxonomic scope" value="Bacteria"/>
</dbReference>
<dbReference type="HOGENOM" id="CLU_005281_4_0_0"/>
<dbReference type="PhylomeDB" id="Q5SI49"/>
<dbReference type="Proteomes" id="UP000000532">
    <property type="component" value="Chromosome"/>
</dbReference>
<dbReference type="GO" id="GO:0005829">
    <property type="term" value="C:cytosol"/>
    <property type="evidence" value="ECO:0007669"/>
    <property type="project" value="TreeGrafter"/>
</dbReference>
<dbReference type="GO" id="GO:0003723">
    <property type="term" value="F:RNA binding"/>
    <property type="evidence" value="ECO:0007669"/>
    <property type="project" value="InterPro"/>
</dbReference>
<dbReference type="GO" id="GO:0160150">
    <property type="term" value="F:tRNA pseudouridine(13) synthase activity"/>
    <property type="evidence" value="ECO:0007669"/>
    <property type="project" value="UniProtKB-EC"/>
</dbReference>
<dbReference type="GO" id="GO:0031119">
    <property type="term" value="P:tRNA pseudouridine synthesis"/>
    <property type="evidence" value="ECO:0007669"/>
    <property type="project" value="UniProtKB-UniRule"/>
</dbReference>
<dbReference type="CDD" id="cd02575">
    <property type="entry name" value="PseudoU_synth_EcTruD"/>
    <property type="match status" value="1"/>
</dbReference>
<dbReference type="Gene3D" id="3.30.2350.20">
    <property type="entry name" value="TruD, catalytic domain"/>
    <property type="match status" value="1"/>
</dbReference>
<dbReference type="Gene3D" id="3.30.2340.10">
    <property type="entry name" value="TruD, insertion domain"/>
    <property type="match status" value="1"/>
</dbReference>
<dbReference type="HAMAP" id="MF_01082">
    <property type="entry name" value="TruD"/>
    <property type="match status" value="1"/>
</dbReference>
<dbReference type="InterPro" id="IPR020103">
    <property type="entry name" value="PsdUridine_synth_cat_dom_sf"/>
</dbReference>
<dbReference type="InterPro" id="IPR001656">
    <property type="entry name" value="PsdUridine_synth_TruD"/>
</dbReference>
<dbReference type="InterPro" id="IPR011760">
    <property type="entry name" value="PsdUridine_synth_TruD_insert"/>
</dbReference>
<dbReference type="InterPro" id="IPR042214">
    <property type="entry name" value="TruD_catalytic"/>
</dbReference>
<dbReference type="InterPro" id="IPR043165">
    <property type="entry name" value="TruD_insert_sf"/>
</dbReference>
<dbReference type="InterPro" id="IPR050170">
    <property type="entry name" value="TruD_pseudoU_synthase"/>
</dbReference>
<dbReference type="PANTHER" id="PTHR47811">
    <property type="entry name" value="TRNA PSEUDOURIDINE SYNTHASE D"/>
    <property type="match status" value="1"/>
</dbReference>
<dbReference type="PANTHER" id="PTHR47811:SF1">
    <property type="entry name" value="TRNA PSEUDOURIDINE SYNTHASE D"/>
    <property type="match status" value="1"/>
</dbReference>
<dbReference type="Pfam" id="PF01142">
    <property type="entry name" value="TruD"/>
    <property type="match status" value="2"/>
</dbReference>
<dbReference type="SUPFAM" id="SSF55120">
    <property type="entry name" value="Pseudouridine synthase"/>
    <property type="match status" value="1"/>
</dbReference>
<dbReference type="PROSITE" id="PS50984">
    <property type="entry name" value="TRUD"/>
    <property type="match status" value="1"/>
</dbReference>
<comment type="function">
    <text evidence="1">Responsible for synthesis of pseudouridine from uracil-13 in transfer RNAs.</text>
</comment>
<comment type="catalytic activity">
    <reaction evidence="1">
        <text>uridine(13) in tRNA = pseudouridine(13) in tRNA</text>
        <dbReference type="Rhea" id="RHEA:42540"/>
        <dbReference type="Rhea" id="RHEA-COMP:10105"/>
        <dbReference type="Rhea" id="RHEA-COMP:10106"/>
        <dbReference type="ChEBI" id="CHEBI:65314"/>
        <dbReference type="ChEBI" id="CHEBI:65315"/>
        <dbReference type="EC" id="5.4.99.27"/>
    </reaction>
</comment>
<comment type="similarity">
    <text evidence="1">Belongs to the pseudouridine synthase TruD family.</text>
</comment>
<reference key="1">
    <citation type="submission" date="2004-11" db="EMBL/GenBank/DDBJ databases">
        <title>Complete genome sequence of Thermus thermophilus HB8.</title>
        <authorList>
            <person name="Masui R."/>
            <person name="Kurokawa K."/>
            <person name="Nakagawa N."/>
            <person name="Tokunaga F."/>
            <person name="Koyama Y."/>
            <person name="Shibata T."/>
            <person name="Oshima T."/>
            <person name="Yokoyama S."/>
            <person name="Yasunaga T."/>
            <person name="Kuramitsu S."/>
        </authorList>
    </citation>
    <scope>NUCLEOTIDE SEQUENCE [LARGE SCALE GENOMIC DNA]</scope>
    <source>
        <strain>ATCC 27634 / DSM 579 / HB8</strain>
    </source>
</reference>
<keyword id="KW-0413">Isomerase</keyword>
<keyword id="KW-1185">Reference proteome</keyword>
<keyword id="KW-0819">tRNA processing</keyword>
<protein>
    <recommendedName>
        <fullName evidence="1">tRNA pseudouridine synthase D</fullName>
        <ecNumber evidence="1">5.4.99.27</ecNumber>
    </recommendedName>
    <alternativeName>
        <fullName evidence="1">tRNA pseudouridine(13) synthase</fullName>
    </alternativeName>
    <alternativeName>
        <fullName evidence="1">tRNA pseudouridylate synthase D</fullName>
    </alternativeName>
    <alternativeName>
        <fullName evidence="1">tRNA-uridine isomerase D</fullName>
    </alternativeName>
</protein>
<organism>
    <name type="scientific">Thermus thermophilus (strain ATCC 27634 / DSM 579 / HB8)</name>
    <dbReference type="NCBI Taxonomy" id="300852"/>
    <lineage>
        <taxon>Bacteria</taxon>
        <taxon>Thermotogati</taxon>
        <taxon>Deinococcota</taxon>
        <taxon>Deinococci</taxon>
        <taxon>Thermales</taxon>
        <taxon>Thermaceae</taxon>
        <taxon>Thermus</taxon>
    </lineage>
</organism>
<name>TRUD_THET8</name>
<sequence length="356" mass="40182">MDLVFRPERYPFLTQDLPGVGGEIRVEPEDFQVEEVPAYLPKGEGEHLYLLLEKEGRTTREVLEFLRDEVGVPEKEIGVAGLKDKRAKTRQWFSIPRKYEDALCLLENLQGVRLLAADLHTNKLRTGHLKGNRFHILIRRPKGGVAEAEAVLKRLAEKGVPNYYGPQRFGLGGLNPVRGYKLVKEGKGRGSPWLKRFLIGSLQSLLFNDWVALRMALGLYDRVVPGDWAKKHATGGEFLVEDPGEAERALRLEISATGPLFGKKYPEAQGEARAIEDEVLARYGLKREEFRARRGARRPIRVPLAEWKVEEAPEGLWLSFFLPKGSYATSLLREVMKVEALDHLEAEPAPEDAEGL</sequence>
<gene>
    <name evidence="1" type="primary">truD</name>
    <name type="ordered locus">TTHA1531</name>
</gene>